<proteinExistence type="inferred from homology"/>
<feature type="chain" id="PRO_1000089453" description="Octanoyltransferase">
    <location>
        <begin position="1"/>
        <end position="218"/>
    </location>
</feature>
<feature type="domain" description="BPL/LPL catalytic" evidence="2">
    <location>
        <begin position="27"/>
        <end position="210"/>
    </location>
</feature>
<feature type="active site" description="Acyl-thioester intermediate" evidence="1">
    <location>
        <position position="170"/>
    </location>
</feature>
<feature type="binding site" evidence="1">
    <location>
        <begin position="72"/>
        <end position="79"/>
    </location>
    <ligand>
        <name>substrate</name>
    </ligand>
</feature>
<feature type="binding site" evidence="1">
    <location>
        <begin position="139"/>
        <end position="141"/>
    </location>
    <ligand>
        <name>substrate</name>
    </ligand>
</feature>
<feature type="binding site" evidence="1">
    <location>
        <begin position="152"/>
        <end position="154"/>
    </location>
    <ligand>
        <name>substrate</name>
    </ligand>
</feature>
<feature type="site" description="Lowers pKa of active site Cys" evidence="1">
    <location>
        <position position="136"/>
    </location>
</feature>
<gene>
    <name evidence="1" type="primary">lipB</name>
    <name type="ordered locus">Dvul_2078</name>
</gene>
<reference key="1">
    <citation type="journal article" date="2009" name="Environ. Microbiol.">
        <title>Contribution of mobile genetic elements to Desulfovibrio vulgaris genome plasticity.</title>
        <authorList>
            <person name="Walker C.B."/>
            <person name="Stolyar S."/>
            <person name="Chivian D."/>
            <person name="Pinel N."/>
            <person name="Gabster J.A."/>
            <person name="Dehal P.S."/>
            <person name="He Z."/>
            <person name="Yang Z.K."/>
            <person name="Yen H.C."/>
            <person name="Zhou J."/>
            <person name="Wall J.D."/>
            <person name="Hazen T.C."/>
            <person name="Arkin A.P."/>
            <person name="Stahl D.A."/>
        </authorList>
    </citation>
    <scope>NUCLEOTIDE SEQUENCE [LARGE SCALE GENOMIC DNA]</scope>
    <source>
        <strain>DP4</strain>
    </source>
</reference>
<comment type="function">
    <text evidence="1">Catalyzes the transfer of endogenously produced octanoic acid from octanoyl-acyl-carrier-protein onto the lipoyl domains of lipoate-dependent enzymes. Lipoyl-ACP can also act as a substrate although octanoyl-ACP is likely to be the physiological substrate.</text>
</comment>
<comment type="catalytic activity">
    <reaction evidence="1">
        <text>octanoyl-[ACP] + L-lysyl-[protein] = N(6)-octanoyl-L-lysyl-[protein] + holo-[ACP] + H(+)</text>
        <dbReference type="Rhea" id="RHEA:17665"/>
        <dbReference type="Rhea" id="RHEA-COMP:9636"/>
        <dbReference type="Rhea" id="RHEA-COMP:9685"/>
        <dbReference type="Rhea" id="RHEA-COMP:9752"/>
        <dbReference type="Rhea" id="RHEA-COMP:9928"/>
        <dbReference type="ChEBI" id="CHEBI:15378"/>
        <dbReference type="ChEBI" id="CHEBI:29969"/>
        <dbReference type="ChEBI" id="CHEBI:64479"/>
        <dbReference type="ChEBI" id="CHEBI:78463"/>
        <dbReference type="ChEBI" id="CHEBI:78809"/>
        <dbReference type="EC" id="2.3.1.181"/>
    </reaction>
</comment>
<comment type="pathway">
    <text evidence="1">Protein modification; protein lipoylation via endogenous pathway; protein N(6)-(lipoyl)lysine from octanoyl-[acyl-carrier-protein]: step 1/2.</text>
</comment>
<comment type="subcellular location">
    <subcellularLocation>
        <location evidence="1">Cytoplasm</location>
    </subcellularLocation>
</comment>
<comment type="miscellaneous">
    <text evidence="1">In the reaction, the free carboxyl group of octanoic acid is attached via an amide linkage to the epsilon-amino group of a specific lysine residue of lipoyl domains of lipoate-dependent enzymes.</text>
</comment>
<comment type="similarity">
    <text evidence="1">Belongs to the LipB family.</text>
</comment>
<accession>A1VF78</accession>
<name>LIPB_NITV4</name>
<organism>
    <name type="scientific">Nitratidesulfovibrio vulgaris (strain DP4)</name>
    <name type="common">Desulfovibrio vulgaris</name>
    <dbReference type="NCBI Taxonomy" id="391774"/>
    <lineage>
        <taxon>Bacteria</taxon>
        <taxon>Pseudomonadati</taxon>
        <taxon>Thermodesulfobacteriota</taxon>
        <taxon>Desulfovibrionia</taxon>
        <taxon>Desulfovibrionales</taxon>
        <taxon>Desulfovibrionaceae</taxon>
        <taxon>Nitratidesulfovibrio</taxon>
    </lineage>
</organism>
<sequence>MLTIDLGSLSYAEAEAVQTARLGEVSTGGEDTLYLVEHPPVITLGRNGGIENLHAGRGFLAERGIELAQSSRGGNITCHFPGQLVAYPVFRIERRPGGLRSFFHDLEEVVLRTLHTFGLEASRHEGRPGVWIDNRKICSIGVAVRRWTTYHGLALNVGRDLSLFNLITLCGLPDAEATSLHRELDDDSVTMQEVKDVLTRQFLAIFTHPAVAAGEAAL</sequence>
<dbReference type="EC" id="2.3.1.181" evidence="1"/>
<dbReference type="EMBL" id="CP000527">
    <property type="protein sequence ID" value="ABM29094.1"/>
    <property type="molecule type" value="Genomic_DNA"/>
</dbReference>
<dbReference type="RefSeq" id="WP_010938205.1">
    <property type="nucleotide sequence ID" value="NC_008751.1"/>
</dbReference>
<dbReference type="SMR" id="A1VF78"/>
<dbReference type="KEGG" id="dvl:Dvul_2078"/>
<dbReference type="HOGENOM" id="CLU_035168_1_3_7"/>
<dbReference type="UniPathway" id="UPA00538">
    <property type="reaction ID" value="UER00592"/>
</dbReference>
<dbReference type="Proteomes" id="UP000009173">
    <property type="component" value="Chromosome"/>
</dbReference>
<dbReference type="GO" id="GO:0005737">
    <property type="term" value="C:cytoplasm"/>
    <property type="evidence" value="ECO:0007669"/>
    <property type="project" value="UniProtKB-SubCell"/>
</dbReference>
<dbReference type="GO" id="GO:0033819">
    <property type="term" value="F:lipoyl(octanoyl) transferase activity"/>
    <property type="evidence" value="ECO:0007669"/>
    <property type="project" value="UniProtKB-EC"/>
</dbReference>
<dbReference type="GO" id="GO:0036211">
    <property type="term" value="P:protein modification process"/>
    <property type="evidence" value="ECO:0007669"/>
    <property type="project" value="InterPro"/>
</dbReference>
<dbReference type="CDD" id="cd16444">
    <property type="entry name" value="LipB"/>
    <property type="match status" value="1"/>
</dbReference>
<dbReference type="Gene3D" id="3.30.930.10">
    <property type="entry name" value="Bira Bifunctional Protein, Domain 2"/>
    <property type="match status" value="1"/>
</dbReference>
<dbReference type="HAMAP" id="MF_00013">
    <property type="entry name" value="LipB"/>
    <property type="match status" value="1"/>
</dbReference>
<dbReference type="InterPro" id="IPR045864">
    <property type="entry name" value="aa-tRNA-synth_II/BPL/LPL"/>
</dbReference>
<dbReference type="InterPro" id="IPR004143">
    <property type="entry name" value="BPL_LPL_catalytic"/>
</dbReference>
<dbReference type="InterPro" id="IPR000544">
    <property type="entry name" value="Octanoyltransferase"/>
</dbReference>
<dbReference type="InterPro" id="IPR020605">
    <property type="entry name" value="Octanoyltransferase_CS"/>
</dbReference>
<dbReference type="NCBIfam" id="TIGR00214">
    <property type="entry name" value="lipB"/>
    <property type="match status" value="1"/>
</dbReference>
<dbReference type="PANTHER" id="PTHR10993:SF7">
    <property type="entry name" value="LIPOYLTRANSFERASE 2, MITOCHONDRIAL-RELATED"/>
    <property type="match status" value="1"/>
</dbReference>
<dbReference type="PANTHER" id="PTHR10993">
    <property type="entry name" value="OCTANOYLTRANSFERASE"/>
    <property type="match status" value="1"/>
</dbReference>
<dbReference type="Pfam" id="PF21948">
    <property type="entry name" value="LplA-B_cat"/>
    <property type="match status" value="1"/>
</dbReference>
<dbReference type="PIRSF" id="PIRSF016262">
    <property type="entry name" value="LPLase"/>
    <property type="match status" value="1"/>
</dbReference>
<dbReference type="SUPFAM" id="SSF55681">
    <property type="entry name" value="Class II aaRS and biotin synthetases"/>
    <property type="match status" value="1"/>
</dbReference>
<dbReference type="PROSITE" id="PS51733">
    <property type="entry name" value="BPL_LPL_CATALYTIC"/>
    <property type="match status" value="1"/>
</dbReference>
<dbReference type="PROSITE" id="PS01313">
    <property type="entry name" value="LIPB"/>
    <property type="match status" value="1"/>
</dbReference>
<evidence type="ECO:0000255" key="1">
    <source>
        <dbReference type="HAMAP-Rule" id="MF_00013"/>
    </source>
</evidence>
<evidence type="ECO:0000255" key="2">
    <source>
        <dbReference type="PROSITE-ProRule" id="PRU01067"/>
    </source>
</evidence>
<keyword id="KW-0012">Acyltransferase</keyword>
<keyword id="KW-0963">Cytoplasm</keyword>
<keyword id="KW-0808">Transferase</keyword>
<protein>
    <recommendedName>
        <fullName evidence="1">Octanoyltransferase</fullName>
        <ecNumber evidence="1">2.3.1.181</ecNumber>
    </recommendedName>
    <alternativeName>
        <fullName evidence="1">Lipoate-protein ligase B</fullName>
    </alternativeName>
    <alternativeName>
        <fullName evidence="1">Lipoyl/octanoyl transferase</fullName>
    </alternativeName>
    <alternativeName>
        <fullName evidence="1">Octanoyl-[acyl-carrier-protein]-protein N-octanoyltransferase</fullName>
    </alternativeName>
</protein>